<dbReference type="EMBL" id="AAFI02000024">
    <property type="protein sequence ID" value="EAL68055.1"/>
    <property type="molecule type" value="Genomic_DNA"/>
</dbReference>
<dbReference type="RefSeq" id="XP_647813.1">
    <property type="nucleotide sequence ID" value="XM_642721.1"/>
</dbReference>
<dbReference type="SMR" id="Q54XJ0"/>
<dbReference type="FunCoup" id="Q54XJ0">
    <property type="interactions" value="729"/>
</dbReference>
<dbReference type="STRING" id="44689.Q54XJ0"/>
<dbReference type="PaxDb" id="44689-DDB0232218"/>
<dbReference type="EnsemblProtists" id="EAL68055">
    <property type="protein sequence ID" value="EAL68055"/>
    <property type="gene ID" value="DDB_G0278907"/>
</dbReference>
<dbReference type="GeneID" id="8621773"/>
<dbReference type="KEGG" id="ddi:DDB_G0278907"/>
<dbReference type="dictyBase" id="DDB_G0278907">
    <property type="gene designation" value="mobA"/>
</dbReference>
<dbReference type="VEuPathDB" id="AmoebaDB:DDB_G0278907"/>
<dbReference type="eggNOG" id="KOG0440">
    <property type="taxonomic scope" value="Eukaryota"/>
</dbReference>
<dbReference type="HOGENOM" id="CLU_038321_3_2_1"/>
<dbReference type="InParanoid" id="Q54XJ0"/>
<dbReference type="OMA" id="VDNEQMF"/>
<dbReference type="PhylomeDB" id="Q54XJ0"/>
<dbReference type="PRO" id="PR:Q54XJ0"/>
<dbReference type="Proteomes" id="UP000002195">
    <property type="component" value="Chromosome 3"/>
</dbReference>
<dbReference type="GO" id="GO:0005737">
    <property type="term" value="C:cytoplasm"/>
    <property type="evidence" value="ECO:0000318"/>
    <property type="project" value="GO_Central"/>
</dbReference>
<dbReference type="GO" id="GO:0005634">
    <property type="term" value="C:nucleus"/>
    <property type="evidence" value="ECO:0000318"/>
    <property type="project" value="GO_Central"/>
</dbReference>
<dbReference type="GO" id="GO:0046872">
    <property type="term" value="F:metal ion binding"/>
    <property type="evidence" value="ECO:0007669"/>
    <property type="project" value="UniProtKB-KW"/>
</dbReference>
<dbReference type="GO" id="GO:0030295">
    <property type="term" value="F:protein kinase activator activity"/>
    <property type="evidence" value="ECO:0000318"/>
    <property type="project" value="GO_Central"/>
</dbReference>
<dbReference type="GO" id="GO:0007165">
    <property type="term" value="P:signal transduction"/>
    <property type="evidence" value="ECO:0000318"/>
    <property type="project" value="GO_Central"/>
</dbReference>
<dbReference type="FunFam" id="1.20.140.30:FF:000001">
    <property type="entry name" value="MOB kinase activator 1A"/>
    <property type="match status" value="1"/>
</dbReference>
<dbReference type="Gene3D" id="1.20.140.30">
    <property type="entry name" value="MOB kinase activator"/>
    <property type="match status" value="1"/>
</dbReference>
<dbReference type="InterPro" id="IPR005301">
    <property type="entry name" value="MOB_kinase_act_fam"/>
</dbReference>
<dbReference type="InterPro" id="IPR036703">
    <property type="entry name" value="MOB_kinase_act_sf"/>
</dbReference>
<dbReference type="PANTHER" id="PTHR22599">
    <property type="entry name" value="MPS ONE BINDER KINASE ACTIVATOR-LIKE MOB"/>
    <property type="match status" value="1"/>
</dbReference>
<dbReference type="Pfam" id="PF03637">
    <property type="entry name" value="Mob1_phocein"/>
    <property type="match status" value="1"/>
</dbReference>
<dbReference type="SMART" id="SM01388">
    <property type="entry name" value="Mob1_phocein"/>
    <property type="match status" value="1"/>
</dbReference>
<dbReference type="SUPFAM" id="SSF101152">
    <property type="entry name" value="Mob1/phocein"/>
    <property type="match status" value="1"/>
</dbReference>
<sequence length="213" mass="24384">MNIFGKKSQTFKPKKNIQEGSKQYHLKQYAEATLGSGNLKSAVSLPTGEDINEWLAVNTTDFFNQINMLYGTITEFCTGTDCPVMSAGPKYEYHWADGTTVKKAIKVSAPEYVDFLMTWVQSQLDDENIFPSKIGVPFPKNFQSIVKTIFKRLFRVYAHIYHSHFQKIVSLGEEAHLNTSLKHFIYFIQEFNLVDKKELGPLNELIESLMKNP</sequence>
<evidence type="ECO:0000250" key="1"/>
<evidence type="ECO:0000305" key="2"/>
<feature type="chain" id="PRO_0000328574" description="MOB kinase activator-like 1 homolog A">
    <location>
        <begin position="1"/>
        <end position="213"/>
    </location>
</feature>
<feature type="binding site" evidence="1">
    <location>
        <position position="77"/>
    </location>
    <ligand>
        <name>Zn(2+)</name>
        <dbReference type="ChEBI" id="CHEBI:29105"/>
    </ligand>
</feature>
<feature type="binding site" evidence="1">
    <location>
        <position position="82"/>
    </location>
    <ligand>
        <name>Zn(2+)</name>
        <dbReference type="ChEBI" id="CHEBI:29105"/>
    </ligand>
</feature>
<feature type="binding site" evidence="1">
    <location>
        <position position="159"/>
    </location>
    <ligand>
        <name>Zn(2+)</name>
        <dbReference type="ChEBI" id="CHEBI:29105"/>
    </ligand>
</feature>
<feature type="binding site" evidence="1">
    <location>
        <position position="164"/>
    </location>
    <ligand>
        <name>Zn(2+)</name>
        <dbReference type="ChEBI" id="CHEBI:29105"/>
    </ligand>
</feature>
<gene>
    <name type="primary">mobA</name>
    <name type="ORF">DDB_G0278907</name>
</gene>
<keyword id="KW-0479">Metal-binding</keyword>
<keyword id="KW-1185">Reference proteome</keyword>
<keyword id="KW-0862">Zinc</keyword>
<comment type="similarity">
    <text evidence="2">Belongs to the MOB1/phocein family.</text>
</comment>
<organism>
    <name type="scientific">Dictyostelium discoideum</name>
    <name type="common">Social amoeba</name>
    <dbReference type="NCBI Taxonomy" id="44689"/>
    <lineage>
        <taxon>Eukaryota</taxon>
        <taxon>Amoebozoa</taxon>
        <taxon>Evosea</taxon>
        <taxon>Eumycetozoa</taxon>
        <taxon>Dictyostelia</taxon>
        <taxon>Dictyosteliales</taxon>
        <taxon>Dictyosteliaceae</taxon>
        <taxon>Dictyostelium</taxon>
    </lineage>
</organism>
<reference key="1">
    <citation type="journal article" date="2005" name="Nature">
        <title>The genome of the social amoeba Dictyostelium discoideum.</title>
        <authorList>
            <person name="Eichinger L."/>
            <person name="Pachebat J.A."/>
            <person name="Gloeckner G."/>
            <person name="Rajandream M.A."/>
            <person name="Sucgang R."/>
            <person name="Berriman M."/>
            <person name="Song J."/>
            <person name="Olsen R."/>
            <person name="Szafranski K."/>
            <person name="Xu Q."/>
            <person name="Tunggal B."/>
            <person name="Kummerfeld S."/>
            <person name="Madera M."/>
            <person name="Konfortov B.A."/>
            <person name="Rivero F."/>
            <person name="Bankier A.T."/>
            <person name="Lehmann R."/>
            <person name="Hamlin N."/>
            <person name="Davies R."/>
            <person name="Gaudet P."/>
            <person name="Fey P."/>
            <person name="Pilcher K."/>
            <person name="Chen G."/>
            <person name="Saunders D."/>
            <person name="Sodergren E.J."/>
            <person name="Davis P."/>
            <person name="Kerhornou A."/>
            <person name="Nie X."/>
            <person name="Hall N."/>
            <person name="Anjard C."/>
            <person name="Hemphill L."/>
            <person name="Bason N."/>
            <person name="Farbrother P."/>
            <person name="Desany B."/>
            <person name="Just E."/>
            <person name="Morio T."/>
            <person name="Rost R."/>
            <person name="Churcher C.M."/>
            <person name="Cooper J."/>
            <person name="Haydock S."/>
            <person name="van Driessche N."/>
            <person name="Cronin A."/>
            <person name="Goodhead I."/>
            <person name="Muzny D.M."/>
            <person name="Mourier T."/>
            <person name="Pain A."/>
            <person name="Lu M."/>
            <person name="Harper D."/>
            <person name="Lindsay R."/>
            <person name="Hauser H."/>
            <person name="James K.D."/>
            <person name="Quiles M."/>
            <person name="Madan Babu M."/>
            <person name="Saito T."/>
            <person name="Buchrieser C."/>
            <person name="Wardroper A."/>
            <person name="Felder M."/>
            <person name="Thangavelu M."/>
            <person name="Johnson D."/>
            <person name="Knights A."/>
            <person name="Loulseged H."/>
            <person name="Mungall K.L."/>
            <person name="Oliver K."/>
            <person name="Price C."/>
            <person name="Quail M.A."/>
            <person name="Urushihara H."/>
            <person name="Hernandez J."/>
            <person name="Rabbinowitsch E."/>
            <person name="Steffen D."/>
            <person name="Sanders M."/>
            <person name="Ma J."/>
            <person name="Kohara Y."/>
            <person name="Sharp S."/>
            <person name="Simmonds M.N."/>
            <person name="Spiegler S."/>
            <person name="Tivey A."/>
            <person name="Sugano S."/>
            <person name="White B."/>
            <person name="Walker D."/>
            <person name="Woodward J.R."/>
            <person name="Winckler T."/>
            <person name="Tanaka Y."/>
            <person name="Shaulsky G."/>
            <person name="Schleicher M."/>
            <person name="Weinstock G.M."/>
            <person name="Rosenthal A."/>
            <person name="Cox E.C."/>
            <person name="Chisholm R.L."/>
            <person name="Gibbs R.A."/>
            <person name="Loomis W.F."/>
            <person name="Platzer M."/>
            <person name="Kay R.R."/>
            <person name="Williams J.G."/>
            <person name="Dear P.H."/>
            <person name="Noegel A.A."/>
            <person name="Barrell B.G."/>
            <person name="Kuspa A."/>
        </authorList>
    </citation>
    <scope>NUCLEOTIDE SEQUENCE [LARGE SCALE GENOMIC DNA]</scope>
    <source>
        <strain>AX4</strain>
    </source>
</reference>
<protein>
    <recommendedName>
        <fullName>MOB kinase activator-like 1 homolog A</fullName>
    </recommendedName>
    <alternativeName>
        <fullName>Mps one binder kinase activator-like 1 homolog A</fullName>
    </alternativeName>
</protein>
<proteinExistence type="inferred from homology"/>
<name>MOB1A_DICDI</name>
<accession>Q54XJ0</accession>